<gene>
    <name type="primary">SPINT3</name>
</gene>
<proteinExistence type="evidence at protein level"/>
<accession>P49223</accession>
<accession>A6NCQ6</accession>
<accession>Q6UDR8</accession>
<accession>Q96KK2</accession>
<sequence>MQLQASLSFLLILTLCLELRSELARDTIKDLLPNVCAFPMEKGPCQTYMTRWFFNFETGECELFAYGGCGGNSNNFLRKEKCEKFCKFT</sequence>
<organism>
    <name type="scientific">Homo sapiens</name>
    <name type="common">Human</name>
    <dbReference type="NCBI Taxonomy" id="9606"/>
    <lineage>
        <taxon>Eukaryota</taxon>
        <taxon>Metazoa</taxon>
        <taxon>Chordata</taxon>
        <taxon>Craniata</taxon>
        <taxon>Vertebrata</taxon>
        <taxon>Euteleostomi</taxon>
        <taxon>Mammalia</taxon>
        <taxon>Eutheria</taxon>
        <taxon>Euarchontoglires</taxon>
        <taxon>Primates</taxon>
        <taxon>Haplorrhini</taxon>
        <taxon>Catarrhini</taxon>
        <taxon>Hominidae</taxon>
        <taxon>Homo</taxon>
    </lineage>
</organism>
<reference key="1">
    <citation type="submission" date="2003-08" db="EMBL/GenBank/DDBJ databases">
        <title>Several Kunitz-type serine proteinase inhibitors are expressed in the epididymis.</title>
        <authorList>
            <person name="Clauss A."/>
            <person name="Lundwall A."/>
        </authorList>
    </citation>
    <scope>NUCLEOTIDE SEQUENCE [MRNA]</scope>
    <source>
        <tissue>Epididymis</tissue>
    </source>
</reference>
<reference key="2">
    <citation type="journal article" date="2001" name="Nature">
        <title>The DNA sequence and comparative analysis of human chromosome 20.</title>
        <authorList>
            <person name="Deloukas P."/>
            <person name="Matthews L.H."/>
            <person name="Ashurst J.L."/>
            <person name="Burton J."/>
            <person name="Gilbert J.G.R."/>
            <person name="Jones M."/>
            <person name="Stavrides G."/>
            <person name="Almeida J.P."/>
            <person name="Babbage A.K."/>
            <person name="Bagguley C.L."/>
            <person name="Bailey J."/>
            <person name="Barlow K.F."/>
            <person name="Bates K.N."/>
            <person name="Beard L.M."/>
            <person name="Beare D.M."/>
            <person name="Beasley O.P."/>
            <person name="Bird C.P."/>
            <person name="Blakey S.E."/>
            <person name="Bridgeman A.M."/>
            <person name="Brown A.J."/>
            <person name="Buck D."/>
            <person name="Burrill W.D."/>
            <person name="Butler A.P."/>
            <person name="Carder C."/>
            <person name="Carter N.P."/>
            <person name="Chapman J.C."/>
            <person name="Clamp M."/>
            <person name="Clark G."/>
            <person name="Clark L.N."/>
            <person name="Clark S.Y."/>
            <person name="Clee C.M."/>
            <person name="Clegg S."/>
            <person name="Cobley V.E."/>
            <person name="Collier R.E."/>
            <person name="Connor R.E."/>
            <person name="Corby N.R."/>
            <person name="Coulson A."/>
            <person name="Coville G.J."/>
            <person name="Deadman R."/>
            <person name="Dhami P.D."/>
            <person name="Dunn M."/>
            <person name="Ellington A.G."/>
            <person name="Frankland J.A."/>
            <person name="Fraser A."/>
            <person name="French L."/>
            <person name="Garner P."/>
            <person name="Grafham D.V."/>
            <person name="Griffiths C."/>
            <person name="Griffiths M.N.D."/>
            <person name="Gwilliam R."/>
            <person name="Hall R.E."/>
            <person name="Hammond S."/>
            <person name="Harley J.L."/>
            <person name="Heath P.D."/>
            <person name="Ho S."/>
            <person name="Holden J.L."/>
            <person name="Howden P.J."/>
            <person name="Huckle E."/>
            <person name="Hunt A.R."/>
            <person name="Hunt S.E."/>
            <person name="Jekosch K."/>
            <person name="Johnson C.M."/>
            <person name="Johnson D."/>
            <person name="Kay M.P."/>
            <person name="Kimberley A.M."/>
            <person name="King A."/>
            <person name="Knights A."/>
            <person name="Laird G.K."/>
            <person name="Lawlor S."/>
            <person name="Lehvaeslaiho M.H."/>
            <person name="Leversha M.A."/>
            <person name="Lloyd C."/>
            <person name="Lloyd D.M."/>
            <person name="Lovell J.D."/>
            <person name="Marsh V.L."/>
            <person name="Martin S.L."/>
            <person name="McConnachie L.J."/>
            <person name="McLay K."/>
            <person name="McMurray A.A."/>
            <person name="Milne S.A."/>
            <person name="Mistry D."/>
            <person name="Moore M.J.F."/>
            <person name="Mullikin J.C."/>
            <person name="Nickerson T."/>
            <person name="Oliver K."/>
            <person name="Parker A."/>
            <person name="Patel R."/>
            <person name="Pearce T.A.V."/>
            <person name="Peck A.I."/>
            <person name="Phillimore B.J.C.T."/>
            <person name="Prathalingam S.R."/>
            <person name="Plumb R.W."/>
            <person name="Ramsay H."/>
            <person name="Rice C.M."/>
            <person name="Ross M.T."/>
            <person name="Scott C.E."/>
            <person name="Sehra H.K."/>
            <person name="Shownkeen R."/>
            <person name="Sims S."/>
            <person name="Skuce C.D."/>
            <person name="Smith M.L."/>
            <person name="Soderlund C."/>
            <person name="Steward C.A."/>
            <person name="Sulston J.E."/>
            <person name="Swann R.M."/>
            <person name="Sycamore N."/>
            <person name="Taylor R."/>
            <person name="Tee L."/>
            <person name="Thomas D.W."/>
            <person name="Thorpe A."/>
            <person name="Tracey A."/>
            <person name="Tromans A.C."/>
            <person name="Vaudin M."/>
            <person name="Wall M."/>
            <person name="Wallis J.M."/>
            <person name="Whitehead S.L."/>
            <person name="Whittaker P."/>
            <person name="Willey D.L."/>
            <person name="Williams L."/>
            <person name="Williams S.A."/>
            <person name="Wilming L."/>
            <person name="Wray P.W."/>
            <person name="Hubbard T."/>
            <person name="Durbin R.M."/>
            <person name="Bentley D.R."/>
            <person name="Beck S."/>
            <person name="Rogers J."/>
        </authorList>
    </citation>
    <scope>NUCLEOTIDE SEQUENCE [LARGE SCALE GENOMIC DNA]</scope>
</reference>
<reference key="3">
    <citation type="patent" date="1993-07-22" number="WO9314123">
        <title>A novel human Kunitz-type protease inhibitor and variants thereof.</title>
        <authorList>
            <person name="Norris F."/>
            <person name="Norris K."/>
            <person name="Bjoern S.E."/>
            <person name="Petersen L.C."/>
            <person name="Foster D.C."/>
            <person name="Sprecher C.A."/>
        </authorList>
    </citation>
    <scope>NUCLEOTIDE SEQUENCE [GENOMIC DNA] OF 26-89</scope>
    <source>
        <tissue>Blood</tissue>
        <tissue>Placenta</tissue>
    </source>
</reference>
<protein>
    <recommendedName>
        <fullName>Kunitz-type protease inhibitor 3</fullName>
    </recommendedName>
    <alternativeName>
        <fullName>HKIB9</fullName>
    </alternativeName>
</protein>
<comment type="subcellular location">
    <subcellularLocation>
        <location evidence="3">Secreted</location>
    </subcellularLocation>
</comment>
<evidence type="ECO:0000255" key="1"/>
<evidence type="ECO:0000255" key="2">
    <source>
        <dbReference type="PROSITE-ProRule" id="PRU00031"/>
    </source>
</evidence>
<evidence type="ECO:0000305" key="3"/>
<name>SPIT3_HUMAN</name>
<dbReference type="EMBL" id="AY372172">
    <property type="protein sequence ID" value="AAR17081.2"/>
    <property type="molecule type" value="mRNA"/>
</dbReference>
<dbReference type="EMBL" id="AL031663">
    <property type="status" value="NOT_ANNOTATED_CDS"/>
    <property type="molecule type" value="Genomic_DNA"/>
</dbReference>
<dbReference type="EMBL" id="X77166">
    <property type="protein sequence ID" value="CAA54410.1"/>
    <property type="molecule type" value="Genomic_DNA"/>
</dbReference>
<dbReference type="CCDS" id="CCDS46608.1"/>
<dbReference type="PIR" id="S41399">
    <property type="entry name" value="S41399"/>
</dbReference>
<dbReference type="RefSeq" id="NP_006643.1">
    <property type="nucleotide sequence ID" value="NM_006652.2"/>
</dbReference>
<dbReference type="SMR" id="P49223"/>
<dbReference type="BioGRID" id="116029">
    <property type="interactions" value="1"/>
</dbReference>
<dbReference type="FunCoup" id="P49223">
    <property type="interactions" value="2"/>
</dbReference>
<dbReference type="STRING" id="9606.ENSP00000217428"/>
<dbReference type="MEROPS" id="I02.969"/>
<dbReference type="BioMuta" id="SPINT3"/>
<dbReference type="DMDM" id="152031689"/>
<dbReference type="MassIVE" id="P49223"/>
<dbReference type="PaxDb" id="9606-ENSP00000217428"/>
<dbReference type="PeptideAtlas" id="P49223"/>
<dbReference type="ProteomicsDB" id="55972"/>
<dbReference type="Antibodypedia" id="72138">
    <property type="antibodies" value="8 antibodies from 5 providers"/>
</dbReference>
<dbReference type="DNASU" id="10816"/>
<dbReference type="Ensembl" id="ENST00000217428.7">
    <property type="protein sequence ID" value="ENSP00000217428.6"/>
    <property type="gene ID" value="ENSG00000101446.8"/>
</dbReference>
<dbReference type="GeneID" id="10816"/>
<dbReference type="KEGG" id="hsa:10816"/>
<dbReference type="MANE-Select" id="ENST00000217428.7">
    <property type="protein sequence ID" value="ENSP00000217428.6"/>
    <property type="RefSeq nucleotide sequence ID" value="NM_006652.2"/>
    <property type="RefSeq protein sequence ID" value="NP_006643.1"/>
</dbReference>
<dbReference type="UCSC" id="uc010ghg.1">
    <property type="organism name" value="human"/>
</dbReference>
<dbReference type="AGR" id="HGNC:11248"/>
<dbReference type="CTD" id="10816"/>
<dbReference type="DisGeNET" id="10816"/>
<dbReference type="GeneCards" id="SPINT3"/>
<dbReference type="HGNC" id="HGNC:11248">
    <property type="gene designation" value="SPINT3"/>
</dbReference>
<dbReference type="HPA" id="ENSG00000101446">
    <property type="expression patterns" value="Group enriched (epididymis, seminal vesicle)"/>
</dbReference>
<dbReference type="MIM" id="613941">
    <property type="type" value="gene"/>
</dbReference>
<dbReference type="neXtProt" id="NX_P49223"/>
<dbReference type="OpenTargets" id="ENSG00000101446"/>
<dbReference type="PharmGKB" id="PA36078"/>
<dbReference type="VEuPathDB" id="HostDB:ENSG00000101446"/>
<dbReference type="eggNOG" id="KOG4295">
    <property type="taxonomic scope" value="Eukaryota"/>
</dbReference>
<dbReference type="GeneTree" id="ENSGT00940000163688"/>
<dbReference type="HOGENOM" id="CLU_164133_0_3_1"/>
<dbReference type="InParanoid" id="P49223"/>
<dbReference type="OMA" id="VCAFPME"/>
<dbReference type="OrthoDB" id="4473401at2759"/>
<dbReference type="PAN-GO" id="P49223">
    <property type="GO annotations" value="4 GO annotations based on evolutionary models"/>
</dbReference>
<dbReference type="PhylomeDB" id="P49223"/>
<dbReference type="TreeFam" id="TF327278"/>
<dbReference type="PathwayCommons" id="P49223"/>
<dbReference type="BioGRID-ORCS" id="10816">
    <property type="hits" value="11 hits in 1132 CRISPR screens"/>
</dbReference>
<dbReference type="ChiTaRS" id="SPINT3">
    <property type="organism name" value="human"/>
</dbReference>
<dbReference type="GenomeRNAi" id="10816"/>
<dbReference type="Pharos" id="P49223">
    <property type="development level" value="Tdark"/>
</dbReference>
<dbReference type="PRO" id="PR:P49223"/>
<dbReference type="Proteomes" id="UP000005640">
    <property type="component" value="Chromosome 20"/>
</dbReference>
<dbReference type="RNAct" id="P49223">
    <property type="molecule type" value="protein"/>
</dbReference>
<dbReference type="Bgee" id="ENSG00000101446">
    <property type="expression patterns" value="Expressed in cauda epididymis and 26 other cell types or tissues"/>
</dbReference>
<dbReference type="GO" id="GO:0005576">
    <property type="term" value="C:extracellular region"/>
    <property type="evidence" value="ECO:0007669"/>
    <property type="project" value="UniProtKB-SubCell"/>
</dbReference>
<dbReference type="GO" id="GO:0004867">
    <property type="term" value="F:serine-type endopeptidase inhibitor activity"/>
    <property type="evidence" value="ECO:0007669"/>
    <property type="project" value="UniProtKB-KW"/>
</dbReference>
<dbReference type="CDD" id="cd00109">
    <property type="entry name" value="Kunitz-type"/>
    <property type="match status" value="1"/>
</dbReference>
<dbReference type="FunFam" id="4.10.410.10:FF:000002">
    <property type="entry name" value="WAP, follistatin/kazal, immunoglobulin, kunitz and netrin domain-containing 2"/>
    <property type="match status" value="1"/>
</dbReference>
<dbReference type="Gene3D" id="4.10.410.10">
    <property type="entry name" value="Pancreatic trypsin inhibitor Kunitz domain"/>
    <property type="match status" value="1"/>
</dbReference>
<dbReference type="InterPro" id="IPR002223">
    <property type="entry name" value="Kunitz_BPTI"/>
</dbReference>
<dbReference type="InterPro" id="IPR036880">
    <property type="entry name" value="Kunitz_BPTI_sf"/>
</dbReference>
<dbReference type="InterPro" id="IPR020901">
    <property type="entry name" value="Prtase_inh_Kunz-CS"/>
</dbReference>
<dbReference type="InterPro" id="IPR050098">
    <property type="entry name" value="TFPI/VKTCI-like"/>
</dbReference>
<dbReference type="PANTHER" id="PTHR10083">
    <property type="entry name" value="KUNITZ-TYPE PROTEASE INHIBITOR-RELATED"/>
    <property type="match status" value="1"/>
</dbReference>
<dbReference type="PANTHER" id="PTHR10083:SF373">
    <property type="entry name" value="SERINE PEPTIDASE INHIBITOR, KUNITZ TYPE, 2"/>
    <property type="match status" value="1"/>
</dbReference>
<dbReference type="Pfam" id="PF00014">
    <property type="entry name" value="Kunitz_BPTI"/>
    <property type="match status" value="1"/>
</dbReference>
<dbReference type="PRINTS" id="PR00759">
    <property type="entry name" value="BASICPTASE"/>
</dbReference>
<dbReference type="SMART" id="SM00131">
    <property type="entry name" value="KU"/>
    <property type="match status" value="1"/>
</dbReference>
<dbReference type="SUPFAM" id="SSF57362">
    <property type="entry name" value="BPTI-like"/>
    <property type="match status" value="1"/>
</dbReference>
<dbReference type="PROSITE" id="PS00280">
    <property type="entry name" value="BPTI_KUNITZ_1"/>
    <property type="match status" value="1"/>
</dbReference>
<dbReference type="PROSITE" id="PS50279">
    <property type="entry name" value="BPTI_KUNITZ_2"/>
    <property type="match status" value="1"/>
</dbReference>
<feature type="signal peptide" evidence="1">
    <location>
        <begin position="1"/>
        <end position="24"/>
    </location>
</feature>
<feature type="chain" id="PRO_0000016887" description="Kunitz-type protease inhibitor 3">
    <location>
        <begin position="25"/>
        <end position="89"/>
    </location>
</feature>
<feature type="domain" description="BPTI/Kunitz inhibitor" evidence="2">
    <location>
        <begin position="36"/>
        <end position="86"/>
    </location>
</feature>
<feature type="disulfide bond" evidence="2">
    <location>
        <begin position="36"/>
        <end position="86"/>
    </location>
</feature>
<feature type="disulfide bond" evidence="2">
    <location>
        <begin position="45"/>
        <end position="69"/>
    </location>
</feature>
<feature type="disulfide bond" evidence="2">
    <location>
        <begin position="61"/>
        <end position="82"/>
    </location>
</feature>
<feature type="sequence variant" id="VAR_059443" description="In dbSNP:rs6032259.">
    <original>L</original>
    <variation>S</variation>
    <location>
        <position position="77"/>
    </location>
</feature>
<keyword id="KW-1015">Disulfide bond</keyword>
<keyword id="KW-0646">Protease inhibitor</keyword>
<keyword id="KW-1267">Proteomics identification</keyword>
<keyword id="KW-1185">Reference proteome</keyword>
<keyword id="KW-0964">Secreted</keyword>
<keyword id="KW-0722">Serine protease inhibitor</keyword>
<keyword id="KW-0732">Signal</keyword>